<protein>
    <recommendedName>
        <fullName evidence="5">Large ribosomal subunit protein uL30B</fullName>
    </recommendedName>
    <alternativeName>
        <fullName evidence="6">60S ribosomal protein L7-B</fullName>
    </alternativeName>
    <alternativeName>
        <fullName>L6</fullName>
    </alternativeName>
    <alternativeName>
        <fullName>RP11</fullName>
    </alternativeName>
    <alternativeName>
        <fullName>YL8</fullName>
    </alternativeName>
</protein>
<organism>
    <name type="scientific">Saccharomyces cerevisiae (strain ATCC 204508 / S288c)</name>
    <name type="common">Baker's yeast</name>
    <dbReference type="NCBI Taxonomy" id="559292"/>
    <lineage>
        <taxon>Eukaryota</taxon>
        <taxon>Fungi</taxon>
        <taxon>Dikarya</taxon>
        <taxon>Ascomycota</taxon>
        <taxon>Saccharomycotina</taxon>
        <taxon>Saccharomycetes</taxon>
        <taxon>Saccharomycetales</taxon>
        <taxon>Saccharomycetaceae</taxon>
        <taxon>Saccharomyces</taxon>
    </lineage>
</organism>
<evidence type="ECO:0000256" key="1">
    <source>
        <dbReference type="SAM" id="MobiDB-lite"/>
    </source>
</evidence>
<evidence type="ECO:0000269" key="2">
    <source>
    </source>
</evidence>
<evidence type="ECO:0000269" key="3">
    <source>
    </source>
</evidence>
<evidence type="ECO:0000269" key="4">
    <source>
    </source>
</evidence>
<evidence type="ECO:0000303" key="5">
    <source>
    </source>
</evidence>
<evidence type="ECO:0000303" key="6">
    <source>
    </source>
</evidence>
<evidence type="ECO:0000305" key="7"/>
<evidence type="ECO:0000305" key="8">
    <source>
    </source>
</evidence>
<evidence type="ECO:0000305" key="9">
    <source>
    </source>
</evidence>
<feature type="chain" id="PRO_0000104652" description="Large ribosomal subunit protein uL30B">
    <location>
        <begin position="1"/>
        <end position="244"/>
    </location>
</feature>
<feature type="region of interest" description="Disordered" evidence="1">
    <location>
        <begin position="1"/>
        <end position="21"/>
    </location>
</feature>
<feature type="compositionally biased region" description="Polar residues" evidence="1">
    <location>
        <begin position="1"/>
        <end position="11"/>
    </location>
</feature>
<sequence length="244" mass="27696">MSTEKILTPESQLKKTKAQQKTAEQIAAERAARKAANKEKRAIILERNAAYQKEYETAERNIIQAKRDAKAAGSYYVEAQHKLVFVVRIKGINKIPPKPRKVLQLLRLTRINSGTFVKVTKATLELLKLIEPYVAYGYPSYSTIRQLVYKRGFGKINKQRVPLSDNAIIEANLGKYGILSIDDLIHEIITVGPHFKQANNFLWPFKLSNPSGGWGVPRKFKHFIQGGSFGNREEFINKLVKAMN</sequence>
<proteinExistence type="evidence at protein level"/>
<reference key="1">
    <citation type="journal article" date="1995" name="Curr. Genet.">
        <title>The evolutionary relationships between homologs of ribosomal YL8 protein and YL8-like proteins.</title>
        <authorList>
            <person name="Mizuta K."/>
            <person name="Hashimoto T."/>
            <person name="Otaka E."/>
        </authorList>
    </citation>
    <scope>NUCLEOTIDE SEQUENCE [GENOMIC DNA]</scope>
    <source>
        <strain>A364A / ATCC 22244</strain>
    </source>
</reference>
<reference key="2">
    <citation type="journal article" date="1997" name="Nature">
        <title>The nucleotide sequence of Saccharomyces cerevisiae chromosome XVI.</title>
        <authorList>
            <person name="Bussey H."/>
            <person name="Storms R.K."/>
            <person name="Ahmed A."/>
            <person name="Albermann K."/>
            <person name="Allen E."/>
            <person name="Ansorge W."/>
            <person name="Araujo R."/>
            <person name="Aparicio A."/>
            <person name="Barrell B.G."/>
            <person name="Badcock K."/>
            <person name="Benes V."/>
            <person name="Botstein D."/>
            <person name="Bowman S."/>
            <person name="Brueckner M."/>
            <person name="Carpenter J."/>
            <person name="Cherry J.M."/>
            <person name="Chung E."/>
            <person name="Churcher C.M."/>
            <person name="Coster F."/>
            <person name="Davis K."/>
            <person name="Davis R.W."/>
            <person name="Dietrich F.S."/>
            <person name="Delius H."/>
            <person name="DiPaolo T."/>
            <person name="Dubois E."/>
            <person name="Duesterhoeft A."/>
            <person name="Duncan M."/>
            <person name="Floeth M."/>
            <person name="Fortin N."/>
            <person name="Friesen J.D."/>
            <person name="Fritz C."/>
            <person name="Goffeau A."/>
            <person name="Hall J."/>
            <person name="Hebling U."/>
            <person name="Heumann K."/>
            <person name="Hilbert H."/>
            <person name="Hillier L.W."/>
            <person name="Hunicke-Smith S."/>
            <person name="Hyman R.W."/>
            <person name="Johnston M."/>
            <person name="Kalman S."/>
            <person name="Kleine K."/>
            <person name="Komp C."/>
            <person name="Kurdi O."/>
            <person name="Lashkari D."/>
            <person name="Lew H."/>
            <person name="Lin A."/>
            <person name="Lin D."/>
            <person name="Louis E.J."/>
            <person name="Marathe R."/>
            <person name="Messenguy F."/>
            <person name="Mewes H.-W."/>
            <person name="Mirtipati S."/>
            <person name="Moestl D."/>
            <person name="Mueller-Auer S."/>
            <person name="Namath A."/>
            <person name="Nentwich U."/>
            <person name="Oefner P."/>
            <person name="Pearson D."/>
            <person name="Petel F.X."/>
            <person name="Pohl T.M."/>
            <person name="Purnelle B."/>
            <person name="Rajandream M.A."/>
            <person name="Rechmann S."/>
            <person name="Rieger M."/>
            <person name="Riles L."/>
            <person name="Roberts D."/>
            <person name="Schaefer M."/>
            <person name="Scharfe M."/>
            <person name="Scherens B."/>
            <person name="Schramm S."/>
            <person name="Schroeder M."/>
            <person name="Sdicu A.-M."/>
            <person name="Tettelin H."/>
            <person name="Urrestarazu L.A."/>
            <person name="Ushinsky S."/>
            <person name="Vierendeels F."/>
            <person name="Vissers S."/>
            <person name="Voss H."/>
            <person name="Walsh S.V."/>
            <person name="Wambutt R."/>
            <person name="Wang Y."/>
            <person name="Wedler E."/>
            <person name="Wedler H."/>
            <person name="Winnett E."/>
            <person name="Zhong W.-W."/>
            <person name="Zollner A."/>
            <person name="Vo D.H."/>
            <person name="Hani J."/>
        </authorList>
    </citation>
    <scope>NUCLEOTIDE SEQUENCE [LARGE SCALE GENOMIC DNA]</scope>
    <source>
        <strain>ATCC 204508 / S288c</strain>
    </source>
</reference>
<reference key="3">
    <citation type="journal article" date="2014" name="G3 (Bethesda)">
        <title>The reference genome sequence of Saccharomyces cerevisiae: Then and now.</title>
        <authorList>
            <person name="Engel S.R."/>
            <person name="Dietrich F.S."/>
            <person name="Fisk D.G."/>
            <person name="Binkley G."/>
            <person name="Balakrishnan R."/>
            <person name="Costanzo M.C."/>
            <person name="Dwight S.S."/>
            <person name="Hitz B.C."/>
            <person name="Karra K."/>
            <person name="Nash R.S."/>
            <person name="Weng S."/>
            <person name="Wong E.D."/>
            <person name="Lloyd P."/>
            <person name="Skrzypek M.S."/>
            <person name="Miyasato S.R."/>
            <person name="Simison M."/>
            <person name="Cherry J.M."/>
        </authorList>
    </citation>
    <scope>GENOME REANNOTATION</scope>
    <source>
        <strain>ATCC 204508 / S288c</strain>
    </source>
</reference>
<reference key="4">
    <citation type="journal article" date="1998" name="Yeast">
        <title>The list of cytoplasmic ribosomal proteins of Saccharomyces cerevisiae.</title>
        <authorList>
            <person name="Planta R.J."/>
            <person name="Mager W.H."/>
        </authorList>
    </citation>
    <scope>NOMENCLATURE</scope>
    <scope>SUBUNIT</scope>
</reference>
<reference key="5">
    <citation type="journal article" date="2003" name="Nature">
        <title>Global analysis of protein localization in budding yeast.</title>
        <authorList>
            <person name="Huh W.-K."/>
            <person name="Falvo J.V."/>
            <person name="Gerke L.C."/>
            <person name="Carroll A.S."/>
            <person name="Howson R.W."/>
            <person name="Weissman J.S."/>
            <person name="O'Shea E.K."/>
        </authorList>
    </citation>
    <scope>SUBCELLULAR LOCATION [LARGE SCALE ANALYSIS]</scope>
</reference>
<reference key="6">
    <citation type="journal article" date="2003" name="Nature">
        <title>Global analysis of protein expression in yeast.</title>
        <authorList>
            <person name="Ghaemmaghami S."/>
            <person name="Huh W.-K."/>
            <person name="Bower K."/>
            <person name="Howson R.W."/>
            <person name="Belle A."/>
            <person name="Dephoure N."/>
            <person name="O'Shea E.K."/>
            <person name="Weissman J.S."/>
        </authorList>
    </citation>
    <scope>LEVEL OF PROTEIN EXPRESSION [LARGE SCALE ANALYSIS]</scope>
</reference>
<reference key="7">
    <citation type="journal article" date="2011" name="Science">
        <title>The structure of the eukaryotic ribosome at 3.0 A resolution.</title>
        <authorList>
            <person name="Ben-Shem A."/>
            <person name="Garreau de Loubresse N."/>
            <person name="Melnikov S."/>
            <person name="Jenner L."/>
            <person name="Yusupova G."/>
            <person name="Yusupov M."/>
        </authorList>
    </citation>
    <scope>SUBUNIT</scope>
    <scope>SUBCELLULAR LOCATION</scope>
</reference>
<reference key="8">
    <citation type="journal article" date="2014" name="Curr. Opin. Struct. Biol.">
        <title>A new system for naming ribosomal proteins.</title>
        <authorList>
            <person name="Ban N."/>
            <person name="Beckmann R."/>
            <person name="Cate J.H.D."/>
            <person name="Dinman J.D."/>
            <person name="Dragon F."/>
            <person name="Ellis S.R."/>
            <person name="Lafontaine D.L.J."/>
            <person name="Lindahl L."/>
            <person name="Liljas A."/>
            <person name="Lipton J.M."/>
            <person name="McAlear M.A."/>
            <person name="Moore P.B."/>
            <person name="Noller H.F."/>
            <person name="Ortega J."/>
            <person name="Panse V.G."/>
            <person name="Ramakrishnan V."/>
            <person name="Spahn C.M.T."/>
            <person name="Steitz T.A."/>
            <person name="Tchorzewski M."/>
            <person name="Tollervey D."/>
            <person name="Warren A.J."/>
            <person name="Williamson J.R."/>
            <person name="Wilson D."/>
            <person name="Yonath A."/>
            <person name="Yusupov M."/>
        </authorList>
    </citation>
    <scope>NOMENCLATURE</scope>
</reference>
<keyword id="KW-0963">Cytoplasm</keyword>
<keyword id="KW-1185">Reference proteome</keyword>
<keyword id="KW-0687">Ribonucleoprotein</keyword>
<keyword id="KW-0689">Ribosomal protein</keyword>
<name>RL7B_YEAST</name>
<comment type="function">
    <text evidence="8">Component of the ribosome, a large ribonucleoprotein complex responsible for the synthesis of proteins in the cell. The small ribosomal subunit (SSU) binds messenger RNAs (mRNAs) and translates the encoded message by selecting cognate aminoacyl-transfer RNA (tRNA) molecules. The large subunit (LSU) contains the ribosomal catalytic site termed the peptidyl transferase center (PTC), which catalyzes the formation of peptide bonds, thereby polymerizing the amino acids delivered by tRNAs into a polypeptide chain. The nascent polypeptides leave the ribosome through a tunnel in the LSU and interact with protein factors that function in enzymatic processing, targeting, and the membrane insertion of nascent chains at the exit of the ribosomal tunnel.</text>
</comment>
<comment type="subunit">
    <text evidence="4 9">Component of the large ribosomal subunit (LSU). Mature yeast ribosomes consist of a small (40S) and a large (60S) subunit. The 40S small subunit contains 1 molecule of ribosomal RNA (18S rRNA) and 33 different proteins (encoded by 57 genes). The large 60S subunit contains 3 rRNA molecules (25S, 5.8S and 5S rRNA) and 46 different proteins (encoded by 81 genes) (PubMed:22096102, PubMed:9559554).</text>
</comment>
<comment type="subcellular location">
    <subcellularLocation>
        <location evidence="2 4">Cytoplasm</location>
    </subcellularLocation>
</comment>
<comment type="miscellaneous">
    <text evidence="3">Present with 7080 molecules/cell in log phase SD medium.</text>
</comment>
<comment type="miscellaneous">
    <text evidence="7">There are 2 genes for uL30 in yeast.</text>
</comment>
<comment type="similarity">
    <text evidence="7">Belongs to the universal ribosomal protein uL30 family.</text>
</comment>
<dbReference type="EMBL" id="D25232">
    <property type="protein sequence ID" value="BAA04957.1"/>
    <property type="molecule type" value="Genomic_DNA"/>
</dbReference>
<dbReference type="EMBL" id="Z73554">
    <property type="protein sequence ID" value="CAA97911.1"/>
    <property type="molecule type" value="Genomic_DNA"/>
</dbReference>
<dbReference type="EMBL" id="BK006949">
    <property type="protein sequence ID" value="DAA11237.1"/>
    <property type="molecule type" value="Genomic_DNA"/>
</dbReference>
<dbReference type="PIR" id="S55910">
    <property type="entry name" value="S55910"/>
</dbReference>
<dbReference type="RefSeq" id="NP_015126.1">
    <property type="nucleotide sequence ID" value="NM_001184012.1"/>
</dbReference>
<dbReference type="SMR" id="Q12213"/>
<dbReference type="BioGRID" id="35986">
    <property type="interactions" value="183"/>
</dbReference>
<dbReference type="ComplexPortal" id="CPX-1601">
    <property type="entry name" value="60S cytosolic large ribosomal subunit"/>
</dbReference>
<dbReference type="FunCoup" id="Q12213">
    <property type="interactions" value="1555"/>
</dbReference>
<dbReference type="IntAct" id="Q12213">
    <property type="interactions" value="151"/>
</dbReference>
<dbReference type="MINT" id="Q12213"/>
<dbReference type="STRING" id="4932.YPL198W"/>
<dbReference type="iPTMnet" id="Q12213"/>
<dbReference type="PaxDb" id="4932-YPL198W"/>
<dbReference type="PeptideAtlas" id="Q12213"/>
<dbReference type="EnsemblFungi" id="YPL198W_mRNA">
    <property type="protein sequence ID" value="YPL198W"/>
    <property type="gene ID" value="YPL198W"/>
</dbReference>
<dbReference type="GeneID" id="855903"/>
<dbReference type="KEGG" id="sce:YPL198W"/>
<dbReference type="AGR" id="SGD:S000006119"/>
<dbReference type="SGD" id="S000006119">
    <property type="gene designation" value="RPL7B"/>
</dbReference>
<dbReference type="VEuPathDB" id="FungiDB:YPL198W"/>
<dbReference type="eggNOG" id="KOG3184">
    <property type="taxonomic scope" value="Eukaryota"/>
</dbReference>
<dbReference type="GeneTree" id="ENSGT00950000182878"/>
<dbReference type="HOGENOM" id="CLU_055156_0_2_1"/>
<dbReference type="InParanoid" id="Q12213"/>
<dbReference type="OMA" id="IVEPWIA"/>
<dbReference type="OrthoDB" id="28644at2759"/>
<dbReference type="BioCyc" id="YEAST:G3O-34090-MONOMER"/>
<dbReference type="BioGRID-ORCS" id="855903">
    <property type="hits" value="0 hits in 10 CRISPR screens"/>
</dbReference>
<dbReference type="CD-CODE" id="BDAE0F88">
    <property type="entry name" value="Nucleolus"/>
</dbReference>
<dbReference type="PRO" id="PR:Q12213"/>
<dbReference type="Proteomes" id="UP000002311">
    <property type="component" value="Chromosome XVI"/>
</dbReference>
<dbReference type="RNAct" id="Q12213">
    <property type="molecule type" value="protein"/>
</dbReference>
<dbReference type="GO" id="GO:0005737">
    <property type="term" value="C:cytoplasm"/>
    <property type="evidence" value="ECO:0000314"/>
    <property type="project" value="SGD"/>
</dbReference>
<dbReference type="GO" id="GO:0005829">
    <property type="term" value="C:cytosol"/>
    <property type="evidence" value="ECO:0000304"/>
    <property type="project" value="Reactome"/>
</dbReference>
<dbReference type="GO" id="GO:0022625">
    <property type="term" value="C:cytosolic large ribosomal subunit"/>
    <property type="evidence" value="ECO:0000314"/>
    <property type="project" value="SGD"/>
</dbReference>
<dbReference type="GO" id="GO:0005730">
    <property type="term" value="C:nucleolus"/>
    <property type="evidence" value="ECO:0000314"/>
    <property type="project" value="SGD"/>
</dbReference>
<dbReference type="GO" id="GO:0003723">
    <property type="term" value="F:RNA binding"/>
    <property type="evidence" value="ECO:0000318"/>
    <property type="project" value="GO_Central"/>
</dbReference>
<dbReference type="GO" id="GO:0003735">
    <property type="term" value="F:structural constituent of ribosome"/>
    <property type="evidence" value="ECO:0000318"/>
    <property type="project" value="GO_Central"/>
</dbReference>
<dbReference type="GO" id="GO:0002181">
    <property type="term" value="P:cytoplasmic translation"/>
    <property type="evidence" value="ECO:0000305"/>
    <property type="project" value="SGD"/>
</dbReference>
<dbReference type="GO" id="GO:0000470">
    <property type="term" value="P:maturation of LSU-rRNA"/>
    <property type="evidence" value="ECO:0000315"/>
    <property type="project" value="SGD"/>
</dbReference>
<dbReference type="GO" id="GO:0000463">
    <property type="term" value="P:maturation of LSU-rRNA from tricistronic rRNA transcript (SSU-rRNA, 5.8S rRNA, LSU-rRNA)"/>
    <property type="evidence" value="ECO:0000318"/>
    <property type="project" value="GO_Central"/>
</dbReference>
<dbReference type="GO" id="GO:0042273">
    <property type="term" value="P:ribosomal large subunit biogenesis"/>
    <property type="evidence" value="ECO:0000314"/>
    <property type="project" value="SGD"/>
</dbReference>
<dbReference type="CDD" id="cd01657">
    <property type="entry name" value="Ribosomal_L7_archeal_euk"/>
    <property type="match status" value="1"/>
</dbReference>
<dbReference type="FunFam" id="3.30.1390.20:FF:000002">
    <property type="entry name" value="60S ribosomal protein L7"/>
    <property type="match status" value="1"/>
</dbReference>
<dbReference type="FunFam" id="3.30.1390.20:FF:000003">
    <property type="entry name" value="60S ribosomal protein L7"/>
    <property type="match status" value="1"/>
</dbReference>
<dbReference type="Gene3D" id="3.30.1390.20">
    <property type="entry name" value="Ribosomal protein L30, ferredoxin-like fold domain"/>
    <property type="match status" value="2"/>
</dbReference>
<dbReference type="InterPro" id="IPR036919">
    <property type="entry name" value="Ribo_uL30_ferredoxin-like_sf"/>
</dbReference>
<dbReference type="InterPro" id="IPR039699">
    <property type="entry name" value="Ribosomal_uL30"/>
</dbReference>
<dbReference type="InterPro" id="IPR018038">
    <property type="entry name" value="Ribosomal_uL30_CS"/>
</dbReference>
<dbReference type="InterPro" id="IPR005998">
    <property type="entry name" value="Ribosomal_uL30_euk"/>
</dbReference>
<dbReference type="InterPro" id="IPR035808">
    <property type="entry name" value="Ribosomal_uL30_euk_arc"/>
</dbReference>
<dbReference type="InterPro" id="IPR016082">
    <property type="entry name" value="Ribosomal_uL30_ferredoxin-like"/>
</dbReference>
<dbReference type="InterPro" id="IPR012988">
    <property type="entry name" value="Ribosomal_uL30_N_euk"/>
</dbReference>
<dbReference type="NCBIfam" id="TIGR01310">
    <property type="entry name" value="uL30_euk"/>
    <property type="match status" value="1"/>
</dbReference>
<dbReference type="PANTHER" id="PTHR11524">
    <property type="entry name" value="60S RIBOSOMAL PROTEIN L7"/>
    <property type="match status" value="1"/>
</dbReference>
<dbReference type="PANTHER" id="PTHR11524:SF16">
    <property type="entry name" value="LARGE RIBOSOMAL SUBUNIT PROTEIN UL30"/>
    <property type="match status" value="1"/>
</dbReference>
<dbReference type="Pfam" id="PF00327">
    <property type="entry name" value="Ribosomal_L30"/>
    <property type="match status" value="1"/>
</dbReference>
<dbReference type="Pfam" id="PF08079">
    <property type="entry name" value="Ribosomal_L30_N"/>
    <property type="match status" value="1"/>
</dbReference>
<dbReference type="SUPFAM" id="SSF55129">
    <property type="entry name" value="Ribosomal protein L30p/L7e"/>
    <property type="match status" value="1"/>
</dbReference>
<dbReference type="PROSITE" id="PS00634">
    <property type="entry name" value="RIBOSOMAL_L30"/>
    <property type="match status" value="1"/>
</dbReference>
<gene>
    <name evidence="6" type="primary">RPL7B</name>
    <name type="synonym">RPL6B</name>
    <name type="synonym">YL8B</name>
    <name type="ordered locus">YPL198W</name>
</gene>
<accession>Q12213</accession>
<accession>D6W3H1</accession>